<sequence length="107" mass="12525">MTTEIKKLDPDTAIDIAYDIFLEMAGENLDPADILLFNLQFEERGGVEFVETADDWEEEIGVLIDPEEYAEVWVGLVNEQDEMDDVFAKFLISHREEDREFHVIWKK</sequence>
<reference key="1">
    <citation type="journal article" date="1995" name="Science">
        <title>Whole-genome random sequencing and assembly of Haemophilus influenzae Rd.</title>
        <authorList>
            <person name="Fleischmann R.D."/>
            <person name="Adams M.D."/>
            <person name="White O."/>
            <person name="Clayton R.A."/>
            <person name="Kirkness E.F."/>
            <person name="Kerlavage A.R."/>
            <person name="Bult C.J."/>
            <person name="Tomb J.-F."/>
            <person name="Dougherty B.A."/>
            <person name="Merrick J.M."/>
            <person name="McKenney K."/>
            <person name="Sutton G.G."/>
            <person name="FitzHugh W."/>
            <person name="Fields C.A."/>
            <person name="Gocayne J.D."/>
            <person name="Scott J.D."/>
            <person name="Shirley R."/>
            <person name="Liu L.-I."/>
            <person name="Glodek A."/>
            <person name="Kelley J.M."/>
            <person name="Weidman J.F."/>
            <person name="Phillips C.A."/>
            <person name="Spriggs T."/>
            <person name="Hedblom E."/>
            <person name="Cotton M.D."/>
            <person name="Utterback T.R."/>
            <person name="Hanna M.C."/>
            <person name="Nguyen D.T."/>
            <person name="Saudek D.M."/>
            <person name="Brandon R.C."/>
            <person name="Fine L.D."/>
            <person name="Fritchman J.L."/>
            <person name="Fuhrmann J.L."/>
            <person name="Geoghagen N.S.M."/>
            <person name="Gnehm C.L."/>
            <person name="McDonald L.A."/>
            <person name="Small K.V."/>
            <person name="Fraser C.M."/>
            <person name="Smith H.O."/>
            <person name="Venter J.C."/>
        </authorList>
    </citation>
    <scope>NUCLEOTIDE SEQUENCE [LARGE SCALE GENOMIC DNA]</scope>
    <source>
        <strain>ATCC 51907 / DSM 11121 / KW20 / Rd</strain>
    </source>
</reference>
<reference key="2">
    <citation type="journal article" date="2005" name="Protein Sci.">
        <title>HU-alpha binds to the putative double-stranded DNA mimic HI1450 from Haemophilus influenzae.</title>
        <authorList>
            <person name="Parsons L.M."/>
            <person name="Liu F."/>
            <person name="Orban J."/>
        </authorList>
    </citation>
    <scope>FUNCTION</scope>
    <scope>INTERACTION WITH PROTEIN HU</scope>
</reference>
<reference evidence="8" key="3">
    <citation type="journal article" date="2004" name="Proteins">
        <title>Solution structure of the highly acidic protein HI1450 from Haemophilus influenzae, a putative double-stranded DNA mimic.</title>
        <authorList>
            <person name="Parsons L.M."/>
            <person name="Yeh D.C."/>
            <person name="Orban J."/>
        </authorList>
    </citation>
    <scope>STRUCTURE BY NMR</scope>
    <scope>FUNCTION</scope>
    <scope>SUBUNIT</scope>
    <scope>DOMAIN</scope>
</reference>
<dbReference type="EMBL" id="L42023">
    <property type="protein sequence ID" value="AAC23100.1"/>
    <property type="molecule type" value="Genomic_DNA"/>
</dbReference>
<dbReference type="PIR" id="B64030">
    <property type="entry name" value="B64030"/>
</dbReference>
<dbReference type="RefSeq" id="NP_439602.1">
    <property type="nucleotide sequence ID" value="NC_000907.1"/>
</dbReference>
<dbReference type="PDB" id="1NNV">
    <property type="method" value="NMR"/>
    <property type="chains" value="A=1-107"/>
</dbReference>
<dbReference type="PDBsum" id="1NNV"/>
<dbReference type="BMRB" id="P44199"/>
<dbReference type="SMR" id="P44199"/>
<dbReference type="STRING" id="71421.HI_1450"/>
<dbReference type="EnsemblBacteria" id="AAC23100">
    <property type="protein sequence ID" value="AAC23100"/>
    <property type="gene ID" value="HI_1450"/>
</dbReference>
<dbReference type="KEGG" id="hin:HI_1450"/>
<dbReference type="PATRIC" id="fig|71421.8.peg.1512"/>
<dbReference type="eggNOG" id="COG3099">
    <property type="taxonomic scope" value="Bacteria"/>
</dbReference>
<dbReference type="HOGENOM" id="CLU_143392_0_0_6"/>
<dbReference type="OrthoDB" id="5677388at2"/>
<dbReference type="PhylomeDB" id="P44199"/>
<dbReference type="BioCyc" id="HINF71421:G1GJ1-1476-MONOMER"/>
<dbReference type="EvolutionaryTrace" id="P44199"/>
<dbReference type="Proteomes" id="UP000000579">
    <property type="component" value="Chromosome"/>
</dbReference>
<dbReference type="Gene3D" id="3.10.450.140">
    <property type="entry name" value="dsDNA mimic, putative"/>
    <property type="match status" value="1"/>
</dbReference>
<dbReference type="HAMAP" id="MF_00680">
    <property type="entry name" value="Put_dsDNA_mimic"/>
    <property type="match status" value="1"/>
</dbReference>
<dbReference type="InterPro" id="IPR007376">
    <property type="entry name" value="dsDNA_mimic_put"/>
</dbReference>
<dbReference type="InterPro" id="IPR036763">
    <property type="entry name" value="Put_dsDNA_mimic_sf"/>
</dbReference>
<dbReference type="NCBIfam" id="NF003469">
    <property type="entry name" value="PRK05094.1"/>
    <property type="match status" value="1"/>
</dbReference>
<dbReference type="Pfam" id="PF04269">
    <property type="entry name" value="DUF440"/>
    <property type="match status" value="1"/>
</dbReference>
<dbReference type="PIRSF" id="PIRSF004916">
    <property type="entry name" value="UCP004916"/>
    <property type="match status" value="1"/>
</dbReference>
<dbReference type="SUPFAM" id="SSF102816">
    <property type="entry name" value="Putative dsDNA mimic"/>
    <property type="match status" value="1"/>
</dbReference>
<name>Y1450_HAEIN</name>
<organism>
    <name type="scientific">Haemophilus influenzae (strain ATCC 51907 / DSM 11121 / KW20 / Rd)</name>
    <dbReference type="NCBI Taxonomy" id="71421"/>
    <lineage>
        <taxon>Bacteria</taxon>
        <taxon>Pseudomonadati</taxon>
        <taxon>Pseudomonadota</taxon>
        <taxon>Gammaproteobacteria</taxon>
        <taxon>Pasteurellales</taxon>
        <taxon>Pasteurellaceae</taxon>
        <taxon>Haemophilus</taxon>
    </lineage>
</organism>
<gene>
    <name evidence="7" type="ordered locus">HI_1450</name>
</gene>
<keyword id="KW-0002">3D-structure</keyword>
<keyword id="KW-1185">Reference proteome</keyword>
<feature type="chain" id="PRO_0000072779" description="Putative double-stranded DNA mimic protein HI_1450">
    <location>
        <begin position="1"/>
        <end position="107"/>
    </location>
</feature>
<feature type="helix" evidence="9">
    <location>
        <begin position="10"/>
        <end position="24"/>
    </location>
</feature>
<feature type="helix" evidence="9">
    <location>
        <begin position="31"/>
        <end position="39"/>
    </location>
</feature>
<feature type="strand" evidence="9">
    <location>
        <begin position="40"/>
        <end position="42"/>
    </location>
</feature>
<feature type="strand" evidence="9">
    <location>
        <begin position="46"/>
        <end position="50"/>
    </location>
</feature>
<feature type="turn" evidence="9">
    <location>
        <begin position="55"/>
        <end position="58"/>
    </location>
</feature>
<feature type="strand" evidence="9">
    <location>
        <begin position="59"/>
        <end position="62"/>
    </location>
</feature>
<feature type="strand" evidence="9">
    <location>
        <begin position="68"/>
        <end position="75"/>
    </location>
</feature>
<feature type="strand" evidence="9">
    <location>
        <begin position="86"/>
        <end position="92"/>
    </location>
</feature>
<feature type="strand" evidence="9">
    <location>
        <begin position="94"/>
        <end position="98"/>
    </location>
</feature>
<feature type="strand" evidence="9">
    <location>
        <begin position="101"/>
        <end position="105"/>
    </location>
</feature>
<evidence type="ECO:0000255" key="1">
    <source>
        <dbReference type="HAMAP-Rule" id="MF_00680"/>
    </source>
</evidence>
<evidence type="ECO:0000269" key="2">
    <source>
    </source>
</evidence>
<evidence type="ECO:0000269" key="3">
    <source>
    </source>
</evidence>
<evidence type="ECO:0000303" key="4">
    <source>
    </source>
</evidence>
<evidence type="ECO:0000305" key="5"/>
<evidence type="ECO:0000305" key="6">
    <source>
    </source>
</evidence>
<evidence type="ECO:0000312" key="7">
    <source>
        <dbReference type="EMBL" id="AAC23100.1"/>
    </source>
</evidence>
<evidence type="ECO:0007744" key="8">
    <source>
        <dbReference type="PDB" id="1NNV"/>
    </source>
</evidence>
<evidence type="ECO:0007829" key="9">
    <source>
        <dbReference type="PDB" id="1NNV"/>
    </source>
</evidence>
<accession>P44199</accession>
<protein>
    <recommendedName>
        <fullName evidence="4">Putative double-stranded DNA mimic protein HI_1450</fullName>
    </recommendedName>
</protein>
<proteinExistence type="evidence at protein level"/>
<comment type="function">
    <text evidence="2 3 6">May act as a double-stranded DNA (dsDNA) mimic (PubMed:14747986, PubMed:15883182). Probably regulates the activity of the DNA-binding protein HU (Probable).</text>
</comment>
<comment type="subunit">
    <text evidence="2 3">Monomer in solution (PubMed:14747986). Interacts with the DNA-binding protein HU (PubMed:15883182).</text>
</comment>
<comment type="domain">
    <text evidence="2">Contains many negatively charged residues, which are arranged in winding patterns on the surface similar to the charge distribution seen in dsDNA (PubMed:14747986). The secondary structure elements are arranged in an alpha-alpha-beta-beta-beta-beta order with the two alpha helices packed against the same side of an anti-parallel four-stranded beta sheet (PubMed:14747986).</text>
</comment>
<comment type="similarity">
    <text evidence="1 5">Belongs to the putative dsDNA mimic protein family.</text>
</comment>